<reference key="1">
    <citation type="submission" date="2001-06" db="EMBL/GenBank/DDBJ databases">
        <title>TGF-beta induced apoptosis protein 2 (TAIP-2).</title>
        <authorList>
            <person name="Akiyama N."/>
            <person name="Kondoh S."/>
        </authorList>
    </citation>
    <scope>NUCLEOTIDE SEQUENCE [MRNA] (ISOFORM 1)</scope>
</reference>
<reference key="2">
    <citation type="journal article" date="2004" name="Nat. Genet.">
        <title>Complete sequencing and characterization of 21,243 full-length human cDNAs.</title>
        <authorList>
            <person name="Ota T."/>
            <person name="Suzuki Y."/>
            <person name="Nishikawa T."/>
            <person name="Otsuki T."/>
            <person name="Sugiyama T."/>
            <person name="Irie R."/>
            <person name="Wakamatsu A."/>
            <person name="Hayashi K."/>
            <person name="Sato H."/>
            <person name="Nagai K."/>
            <person name="Kimura K."/>
            <person name="Makita H."/>
            <person name="Sekine M."/>
            <person name="Obayashi M."/>
            <person name="Nishi T."/>
            <person name="Shibahara T."/>
            <person name="Tanaka T."/>
            <person name="Ishii S."/>
            <person name="Yamamoto J."/>
            <person name="Saito K."/>
            <person name="Kawai Y."/>
            <person name="Isono Y."/>
            <person name="Nakamura Y."/>
            <person name="Nagahari K."/>
            <person name="Murakami K."/>
            <person name="Yasuda T."/>
            <person name="Iwayanagi T."/>
            <person name="Wagatsuma M."/>
            <person name="Shiratori A."/>
            <person name="Sudo H."/>
            <person name="Hosoiri T."/>
            <person name="Kaku Y."/>
            <person name="Kodaira H."/>
            <person name="Kondo H."/>
            <person name="Sugawara M."/>
            <person name="Takahashi M."/>
            <person name="Kanda K."/>
            <person name="Yokoi T."/>
            <person name="Furuya T."/>
            <person name="Kikkawa E."/>
            <person name="Omura Y."/>
            <person name="Abe K."/>
            <person name="Kamihara K."/>
            <person name="Katsuta N."/>
            <person name="Sato K."/>
            <person name="Tanikawa M."/>
            <person name="Yamazaki M."/>
            <person name="Ninomiya K."/>
            <person name="Ishibashi T."/>
            <person name="Yamashita H."/>
            <person name="Murakawa K."/>
            <person name="Fujimori K."/>
            <person name="Tanai H."/>
            <person name="Kimata M."/>
            <person name="Watanabe M."/>
            <person name="Hiraoka S."/>
            <person name="Chiba Y."/>
            <person name="Ishida S."/>
            <person name="Ono Y."/>
            <person name="Takiguchi S."/>
            <person name="Watanabe S."/>
            <person name="Yosida M."/>
            <person name="Hotuta T."/>
            <person name="Kusano J."/>
            <person name="Kanehori K."/>
            <person name="Takahashi-Fujii A."/>
            <person name="Hara H."/>
            <person name="Tanase T.-O."/>
            <person name="Nomura Y."/>
            <person name="Togiya S."/>
            <person name="Komai F."/>
            <person name="Hara R."/>
            <person name="Takeuchi K."/>
            <person name="Arita M."/>
            <person name="Imose N."/>
            <person name="Musashino K."/>
            <person name="Yuuki H."/>
            <person name="Oshima A."/>
            <person name="Sasaki N."/>
            <person name="Aotsuka S."/>
            <person name="Yoshikawa Y."/>
            <person name="Matsunawa H."/>
            <person name="Ichihara T."/>
            <person name="Shiohata N."/>
            <person name="Sano S."/>
            <person name="Moriya S."/>
            <person name="Momiyama H."/>
            <person name="Satoh N."/>
            <person name="Takami S."/>
            <person name="Terashima Y."/>
            <person name="Suzuki O."/>
            <person name="Nakagawa S."/>
            <person name="Senoh A."/>
            <person name="Mizoguchi H."/>
            <person name="Goto Y."/>
            <person name="Shimizu F."/>
            <person name="Wakebe H."/>
            <person name="Hishigaki H."/>
            <person name="Watanabe T."/>
            <person name="Sugiyama A."/>
            <person name="Takemoto M."/>
            <person name="Kawakami B."/>
            <person name="Yamazaki M."/>
            <person name="Watanabe K."/>
            <person name="Kumagai A."/>
            <person name="Itakura S."/>
            <person name="Fukuzumi Y."/>
            <person name="Fujimori Y."/>
            <person name="Komiyama M."/>
            <person name="Tashiro H."/>
            <person name="Tanigami A."/>
            <person name="Fujiwara T."/>
            <person name="Ono T."/>
            <person name="Yamada K."/>
            <person name="Fujii Y."/>
            <person name="Ozaki K."/>
            <person name="Hirao M."/>
            <person name="Ohmori Y."/>
            <person name="Kawabata A."/>
            <person name="Hikiji T."/>
            <person name="Kobatake N."/>
            <person name="Inagaki H."/>
            <person name="Ikema Y."/>
            <person name="Okamoto S."/>
            <person name="Okitani R."/>
            <person name="Kawakami T."/>
            <person name="Noguchi S."/>
            <person name="Itoh T."/>
            <person name="Shigeta K."/>
            <person name="Senba T."/>
            <person name="Matsumura K."/>
            <person name="Nakajima Y."/>
            <person name="Mizuno T."/>
            <person name="Morinaga M."/>
            <person name="Sasaki M."/>
            <person name="Togashi T."/>
            <person name="Oyama M."/>
            <person name="Hata H."/>
            <person name="Watanabe M."/>
            <person name="Komatsu T."/>
            <person name="Mizushima-Sugano J."/>
            <person name="Satoh T."/>
            <person name="Shirai Y."/>
            <person name="Takahashi Y."/>
            <person name="Nakagawa K."/>
            <person name="Okumura K."/>
            <person name="Nagase T."/>
            <person name="Nomura N."/>
            <person name="Kikuchi H."/>
            <person name="Masuho Y."/>
            <person name="Yamashita R."/>
            <person name="Nakai K."/>
            <person name="Yada T."/>
            <person name="Nakamura Y."/>
            <person name="Ohara O."/>
            <person name="Isogai T."/>
            <person name="Sugano S."/>
        </authorList>
    </citation>
    <scope>NUCLEOTIDE SEQUENCE [LARGE SCALE MRNA] (ISOFORMS 1 AND 2)</scope>
    <source>
        <tissue>Brain</tissue>
        <tissue>Embryo</tissue>
        <tissue>Thymus</tissue>
    </source>
</reference>
<reference key="3">
    <citation type="journal article" date="2005" name="Nature">
        <title>Generation and annotation of the DNA sequences of human chromosomes 2 and 4.</title>
        <authorList>
            <person name="Hillier L.W."/>
            <person name="Graves T.A."/>
            <person name="Fulton R.S."/>
            <person name="Fulton L.A."/>
            <person name="Pepin K.H."/>
            <person name="Minx P."/>
            <person name="Wagner-McPherson C."/>
            <person name="Layman D."/>
            <person name="Wylie K."/>
            <person name="Sekhon M."/>
            <person name="Becker M.C."/>
            <person name="Fewell G.A."/>
            <person name="Delehaunty K.D."/>
            <person name="Miner T.L."/>
            <person name="Nash W.E."/>
            <person name="Kremitzki C."/>
            <person name="Oddy L."/>
            <person name="Du H."/>
            <person name="Sun H."/>
            <person name="Bradshaw-Cordum H."/>
            <person name="Ali J."/>
            <person name="Carter J."/>
            <person name="Cordes M."/>
            <person name="Harris A."/>
            <person name="Isak A."/>
            <person name="van Brunt A."/>
            <person name="Nguyen C."/>
            <person name="Du F."/>
            <person name="Courtney L."/>
            <person name="Kalicki J."/>
            <person name="Ozersky P."/>
            <person name="Abbott S."/>
            <person name="Armstrong J."/>
            <person name="Belter E.A."/>
            <person name="Caruso L."/>
            <person name="Cedroni M."/>
            <person name="Cotton M."/>
            <person name="Davidson T."/>
            <person name="Desai A."/>
            <person name="Elliott G."/>
            <person name="Erb T."/>
            <person name="Fronick C."/>
            <person name="Gaige T."/>
            <person name="Haakenson W."/>
            <person name="Haglund K."/>
            <person name="Holmes A."/>
            <person name="Harkins R."/>
            <person name="Kim K."/>
            <person name="Kruchowski S.S."/>
            <person name="Strong C.M."/>
            <person name="Grewal N."/>
            <person name="Goyea E."/>
            <person name="Hou S."/>
            <person name="Levy A."/>
            <person name="Martinka S."/>
            <person name="Mead K."/>
            <person name="McLellan M.D."/>
            <person name="Meyer R."/>
            <person name="Randall-Maher J."/>
            <person name="Tomlinson C."/>
            <person name="Dauphin-Kohlberg S."/>
            <person name="Kozlowicz-Reilly A."/>
            <person name="Shah N."/>
            <person name="Swearengen-Shahid S."/>
            <person name="Snider J."/>
            <person name="Strong J.T."/>
            <person name="Thompson J."/>
            <person name="Yoakum M."/>
            <person name="Leonard S."/>
            <person name="Pearman C."/>
            <person name="Trani L."/>
            <person name="Radionenko M."/>
            <person name="Waligorski J.E."/>
            <person name="Wang C."/>
            <person name="Rock S.M."/>
            <person name="Tin-Wollam A.-M."/>
            <person name="Maupin R."/>
            <person name="Latreille P."/>
            <person name="Wendl M.C."/>
            <person name="Yang S.-P."/>
            <person name="Pohl C."/>
            <person name="Wallis J.W."/>
            <person name="Spieth J."/>
            <person name="Bieri T.A."/>
            <person name="Berkowicz N."/>
            <person name="Nelson J.O."/>
            <person name="Osborne J."/>
            <person name="Ding L."/>
            <person name="Meyer R."/>
            <person name="Sabo A."/>
            <person name="Shotland Y."/>
            <person name="Sinha P."/>
            <person name="Wohldmann P.E."/>
            <person name="Cook L.L."/>
            <person name="Hickenbotham M.T."/>
            <person name="Eldred J."/>
            <person name="Williams D."/>
            <person name="Jones T.A."/>
            <person name="She X."/>
            <person name="Ciccarelli F.D."/>
            <person name="Izaurralde E."/>
            <person name="Taylor J."/>
            <person name="Schmutz J."/>
            <person name="Myers R.M."/>
            <person name="Cox D.R."/>
            <person name="Huang X."/>
            <person name="McPherson J.D."/>
            <person name="Mardis E.R."/>
            <person name="Clifton S.W."/>
            <person name="Warren W.C."/>
            <person name="Chinwalla A.T."/>
            <person name="Eddy S.R."/>
            <person name="Marra M.A."/>
            <person name="Ovcharenko I."/>
            <person name="Furey T.S."/>
            <person name="Miller W."/>
            <person name="Eichler E.E."/>
            <person name="Bork P."/>
            <person name="Suyama M."/>
            <person name="Torrents D."/>
            <person name="Waterston R.H."/>
            <person name="Wilson R.K."/>
        </authorList>
    </citation>
    <scope>NUCLEOTIDE SEQUENCE [LARGE SCALE GENOMIC DNA]</scope>
</reference>
<reference key="4">
    <citation type="submission" date="2005-09" db="EMBL/GenBank/DDBJ databases">
        <authorList>
            <person name="Mural R.J."/>
            <person name="Istrail S."/>
            <person name="Sutton G.G."/>
            <person name="Florea L."/>
            <person name="Halpern A.L."/>
            <person name="Mobarry C.M."/>
            <person name="Lippert R."/>
            <person name="Walenz B."/>
            <person name="Shatkay H."/>
            <person name="Dew I."/>
            <person name="Miller J.R."/>
            <person name="Flanigan M.J."/>
            <person name="Edwards N.J."/>
            <person name="Bolanos R."/>
            <person name="Fasulo D."/>
            <person name="Halldorsson B.V."/>
            <person name="Hannenhalli S."/>
            <person name="Turner R."/>
            <person name="Yooseph S."/>
            <person name="Lu F."/>
            <person name="Nusskern D.R."/>
            <person name="Shue B.C."/>
            <person name="Zheng X.H."/>
            <person name="Zhong F."/>
            <person name="Delcher A.L."/>
            <person name="Huson D.H."/>
            <person name="Kravitz S.A."/>
            <person name="Mouchard L."/>
            <person name="Reinert K."/>
            <person name="Remington K.A."/>
            <person name="Clark A.G."/>
            <person name="Waterman M.S."/>
            <person name="Eichler E.E."/>
            <person name="Adams M.D."/>
            <person name="Hunkapiller M.W."/>
            <person name="Myers E.W."/>
            <person name="Venter J.C."/>
        </authorList>
    </citation>
    <scope>NUCLEOTIDE SEQUENCE [LARGE SCALE GENOMIC DNA]</scope>
</reference>
<reference key="5">
    <citation type="journal article" date="2006" name="Science">
        <title>The consensus coding sequences of human breast and colorectal cancers.</title>
        <authorList>
            <person name="Sjoeblom T."/>
            <person name="Jones S."/>
            <person name="Wood L.D."/>
            <person name="Parsons D.W."/>
            <person name="Lin J."/>
            <person name="Barber T.D."/>
            <person name="Mandelker D."/>
            <person name="Leary R.J."/>
            <person name="Ptak J."/>
            <person name="Silliman N."/>
            <person name="Szabo S."/>
            <person name="Buckhaults P."/>
            <person name="Farrell C."/>
            <person name="Meeh P."/>
            <person name="Markowitz S.D."/>
            <person name="Willis J."/>
            <person name="Dawson D."/>
            <person name="Willson J.K.V."/>
            <person name="Gazdar A.F."/>
            <person name="Hartigan J."/>
            <person name="Wu L."/>
            <person name="Liu C."/>
            <person name="Parmigiani G."/>
            <person name="Park B.H."/>
            <person name="Bachman K.E."/>
            <person name="Papadopoulos N."/>
            <person name="Vogelstein B."/>
            <person name="Kinzler K.W."/>
            <person name="Velculescu V.E."/>
        </authorList>
    </citation>
    <scope>VARIANT [LARGE SCALE ANALYSIS] LEU-474</scope>
</reference>
<accession>Q8WYN3</accession>
<accession>B3KPR4</accession>
<accession>Q53SG0</accession>
<accession>Q6ZTX3</accession>
<accession>Q9HAF9</accession>
<evidence type="ECO:0000250" key="1"/>
<evidence type="ECO:0000256" key="2">
    <source>
        <dbReference type="SAM" id="MobiDB-lite"/>
    </source>
</evidence>
<evidence type="ECO:0000269" key="3">
    <source>
    </source>
</evidence>
<evidence type="ECO:0000303" key="4">
    <source>
    </source>
</evidence>
<evidence type="ECO:0000305" key="5"/>
<sequence>MSGILKRKFEEVDGSSPCSSVRESDDEVSSSESADSGDSVNPSTSSHFTPSSILKREKRLRTKNVHFSCVTVYYFTRRQGFTSVPSQGGSTLGMSSRHNSVRQYTLGEFAREQERLHREMLREHLREEKLNSLKLKMTKNGTVESEEASTLTLDDISDDDIDLDNTEVDEYFFLQPLPTKKRRALLRASGVKKIDVEEKHELRAIRLSREDCGCDCRVFCDPDTCTCSLAGIKCQVDRMSFPCGCTKEGCSNTAGRIEFNPIRVRTHFLHTIMKLELEKNREQQIPTLNGCHSEISAHSSSMGPVAHSVEYSIADSFEIETEPQAAVLHLQSAEELDCQGEEEEEEEDGSSFCSGVTDSSTQSLAPSESDEEEEEEEEEEEEEDDDDDKGDGFVEGLGTHAEVVPLPSVLCYSDGTAVHESHAKNASFYANSSTLYYQIDSHIPGTPNQISENYSERDTVKNGTLSLVPYTMTPEQFVDYARQAEEAYGASHYPAANPSVIVCCSSSENDSGVPCNSLYPEHRSNHPQVEFHSYLKGPSQEGFVSALNGDSHISEHPAENSLSLAEKSILHEECIKSPVVETVPV</sequence>
<feature type="chain" id="PRO_0000114788" description="Cysteine/serine-rich nuclear protein 3">
    <location>
        <begin position="1"/>
        <end position="585"/>
    </location>
</feature>
<feature type="region of interest" description="Disordered" evidence="2">
    <location>
        <begin position="1"/>
        <end position="52"/>
    </location>
</feature>
<feature type="region of interest" description="Disordered" evidence="2">
    <location>
        <begin position="335"/>
        <end position="395"/>
    </location>
</feature>
<feature type="compositionally biased region" description="Low complexity" evidence="2">
    <location>
        <begin position="30"/>
        <end position="40"/>
    </location>
</feature>
<feature type="compositionally biased region" description="Polar residues" evidence="2">
    <location>
        <begin position="41"/>
        <end position="52"/>
    </location>
</feature>
<feature type="compositionally biased region" description="Acidic residues" evidence="2">
    <location>
        <begin position="335"/>
        <end position="349"/>
    </location>
</feature>
<feature type="compositionally biased region" description="Polar residues" evidence="2">
    <location>
        <begin position="351"/>
        <end position="366"/>
    </location>
</feature>
<feature type="compositionally biased region" description="Acidic residues" evidence="2">
    <location>
        <begin position="368"/>
        <end position="389"/>
    </location>
</feature>
<feature type="splice variant" id="VSP_034258" description="In isoform 2." evidence="4">
    <original>M</original>
    <variation>MRSQGTCDSTAA</variation>
    <location>
        <position position="1"/>
    </location>
</feature>
<feature type="splice variant" id="VSP_034259" description="In isoform 2." evidence="4">
    <location>
        <begin position="439"/>
        <end position="508"/>
    </location>
</feature>
<feature type="sequence variant" id="VAR_035993" description="In a colorectal cancer sample; somatic mutation; dbSNP:rs766623860." evidence="3">
    <original>P</original>
    <variation>L</variation>
    <location>
        <position position="474"/>
    </location>
</feature>
<organism>
    <name type="scientific">Homo sapiens</name>
    <name type="common">Human</name>
    <dbReference type="NCBI Taxonomy" id="9606"/>
    <lineage>
        <taxon>Eukaryota</taxon>
        <taxon>Metazoa</taxon>
        <taxon>Chordata</taxon>
        <taxon>Craniata</taxon>
        <taxon>Vertebrata</taxon>
        <taxon>Euteleostomi</taxon>
        <taxon>Mammalia</taxon>
        <taxon>Eutheria</taxon>
        <taxon>Euarchontoglires</taxon>
        <taxon>Primates</taxon>
        <taxon>Haplorrhini</taxon>
        <taxon>Catarrhini</taxon>
        <taxon>Hominidae</taxon>
        <taxon>Homo</taxon>
    </lineage>
</organism>
<name>CSRN3_HUMAN</name>
<comment type="function">
    <text evidence="1">Binds to the consensus sequence 5'-AGAGTG-3' and has transcriptional activator activity. Plays a role in apoptosis (By similarity).</text>
</comment>
<comment type="subcellular location">
    <subcellularLocation>
        <location evidence="1">Nucleus</location>
    </subcellularLocation>
</comment>
<comment type="alternative products">
    <event type="alternative splicing"/>
    <isoform>
        <id>Q8WYN3-1</id>
        <name>1</name>
        <sequence type="displayed"/>
    </isoform>
    <isoform>
        <id>Q8WYN3-2</id>
        <name>2</name>
        <sequence type="described" ref="VSP_034258 VSP_034259"/>
    </isoform>
</comment>
<comment type="similarity">
    <text evidence="5">Belongs to the AXUD1 family.</text>
</comment>
<comment type="sequence caution" evidence="5">
    <conflict type="erroneous initiation">
        <sequence resource="EMBL-CDS" id="BAB13890"/>
    </conflict>
</comment>
<comment type="sequence caution" evidence="5">
    <conflict type="frameshift">
        <sequence resource="EMBL-CDS" id="BAC86454"/>
    </conflict>
</comment>
<comment type="sequence caution" evidence="5">
    <conflict type="miscellaneous discrepancy">
        <sequence resource="EMBL-CDS" id="BAC86454"/>
    </conflict>
    <text>Unusual initiator. The initiator methionine is coded by a non-canonical CTG leucine codon.</text>
</comment>
<keyword id="KW-0010">Activator</keyword>
<keyword id="KW-0025">Alternative splicing</keyword>
<keyword id="KW-0053">Apoptosis</keyword>
<keyword id="KW-0238">DNA-binding</keyword>
<keyword id="KW-0539">Nucleus</keyword>
<keyword id="KW-1267">Proteomics identification</keyword>
<keyword id="KW-1185">Reference proteome</keyword>
<keyword id="KW-0804">Transcription</keyword>
<keyword id="KW-0805">Transcription regulation</keyword>
<proteinExistence type="evidence at protein level"/>
<protein>
    <recommendedName>
        <fullName>Cysteine/serine-rich nuclear protein 3</fullName>
        <shortName>CSRNP-3</shortName>
    </recommendedName>
    <alternativeName>
        <fullName>Protein FAM130A2</fullName>
    </alternativeName>
    <alternativeName>
        <fullName>TGF-beta-induced apoptosis protein 2</fullName>
        <shortName>TAIP-2</shortName>
    </alternativeName>
</protein>
<gene>
    <name type="primary">CSRNP3</name>
    <name type="synonym">FAM130A2</name>
    <name type="synonym">TAIP2</name>
</gene>
<dbReference type="EMBL" id="AB063300">
    <property type="protein sequence ID" value="BAB79449.1"/>
    <property type="molecule type" value="mRNA"/>
</dbReference>
<dbReference type="EMBL" id="AK021765">
    <property type="protein sequence ID" value="BAB13890.1"/>
    <property type="status" value="ALT_INIT"/>
    <property type="molecule type" value="mRNA"/>
</dbReference>
<dbReference type="EMBL" id="AK056655">
    <property type="protein sequence ID" value="BAG51776.1"/>
    <property type="molecule type" value="mRNA"/>
</dbReference>
<dbReference type="EMBL" id="AK126129">
    <property type="protein sequence ID" value="BAC86454.1"/>
    <property type="status" value="ALT_FRAME"/>
    <property type="molecule type" value="mRNA"/>
</dbReference>
<dbReference type="EMBL" id="AC019140">
    <property type="protein sequence ID" value="AAY24139.1"/>
    <property type="molecule type" value="Genomic_DNA"/>
</dbReference>
<dbReference type="EMBL" id="CH471058">
    <property type="protein sequence ID" value="EAX11326.1"/>
    <property type="molecule type" value="Genomic_DNA"/>
</dbReference>
<dbReference type="CCDS" id="CCDS2225.1">
    <molecule id="Q8WYN3-1"/>
</dbReference>
<dbReference type="RefSeq" id="NP_001165644.1">
    <molecule id="Q8WYN3-1"/>
    <property type="nucleotide sequence ID" value="NM_001172173.2"/>
</dbReference>
<dbReference type="RefSeq" id="NP_079245.2">
    <molecule id="Q8WYN3-1"/>
    <property type="nucleotide sequence ID" value="NM_024969.3"/>
</dbReference>
<dbReference type="RefSeq" id="XP_024308923.1">
    <molecule id="Q8WYN3-1"/>
    <property type="nucleotide sequence ID" value="XM_024453155.2"/>
</dbReference>
<dbReference type="RefSeq" id="XP_047301864.1">
    <molecule id="Q8WYN3-1"/>
    <property type="nucleotide sequence ID" value="XM_047445908.1"/>
</dbReference>
<dbReference type="RefSeq" id="XP_054199985.1">
    <molecule id="Q8WYN3-1"/>
    <property type="nucleotide sequence ID" value="XM_054344010.1"/>
</dbReference>
<dbReference type="BioGRID" id="123083">
    <property type="interactions" value="3"/>
</dbReference>
<dbReference type="ELM" id="Q8WYN3"/>
<dbReference type="FunCoup" id="Q8WYN3">
    <property type="interactions" value="830"/>
</dbReference>
<dbReference type="IntAct" id="Q8WYN3">
    <property type="interactions" value="2"/>
</dbReference>
<dbReference type="STRING" id="9606.ENSP00000318258"/>
<dbReference type="GlyGen" id="Q8WYN3">
    <property type="glycosylation" value="1 site, 1 O-linked glycan (1 site)"/>
</dbReference>
<dbReference type="iPTMnet" id="Q8WYN3"/>
<dbReference type="PhosphoSitePlus" id="Q8WYN3"/>
<dbReference type="BioMuta" id="CSRNP3"/>
<dbReference type="DMDM" id="24418715"/>
<dbReference type="jPOST" id="Q8WYN3"/>
<dbReference type="MassIVE" id="Q8WYN3"/>
<dbReference type="PaxDb" id="9606-ENSP00000318258"/>
<dbReference type="PeptideAtlas" id="Q8WYN3"/>
<dbReference type="ProteomicsDB" id="75177">
    <molecule id="Q8WYN3-1"/>
</dbReference>
<dbReference type="ProteomicsDB" id="75178">
    <molecule id="Q8WYN3-2"/>
</dbReference>
<dbReference type="Antibodypedia" id="19202">
    <property type="antibodies" value="120 antibodies from 23 providers"/>
</dbReference>
<dbReference type="DNASU" id="80034"/>
<dbReference type="Ensembl" id="ENST00000314499.11">
    <molecule id="Q8WYN3-1"/>
    <property type="protein sequence ID" value="ENSP00000318258.7"/>
    <property type="gene ID" value="ENSG00000178662.16"/>
</dbReference>
<dbReference type="Ensembl" id="ENST00000342316.8">
    <molecule id="Q8WYN3-1"/>
    <property type="protein sequence ID" value="ENSP00000344042.4"/>
    <property type="gene ID" value="ENSG00000178662.16"/>
</dbReference>
<dbReference type="Ensembl" id="ENST00000651982.1">
    <molecule id="Q8WYN3-1"/>
    <property type="protein sequence ID" value="ENSP00000498841.1"/>
    <property type="gene ID" value="ENSG00000178662.16"/>
</dbReference>
<dbReference type="GeneID" id="80034"/>
<dbReference type="KEGG" id="hsa:80034"/>
<dbReference type="MANE-Select" id="ENST00000651982.1">
    <property type="protein sequence ID" value="ENSP00000498841.1"/>
    <property type="RefSeq nucleotide sequence ID" value="NM_001172173.2"/>
    <property type="RefSeq protein sequence ID" value="NP_001165644.1"/>
</dbReference>
<dbReference type="UCSC" id="uc002udf.3">
    <molecule id="Q8WYN3-1"/>
    <property type="organism name" value="human"/>
</dbReference>
<dbReference type="AGR" id="HGNC:30729"/>
<dbReference type="CTD" id="80034"/>
<dbReference type="DisGeNET" id="80034"/>
<dbReference type="GeneCards" id="CSRNP3"/>
<dbReference type="HGNC" id="HGNC:30729">
    <property type="gene designation" value="CSRNP3"/>
</dbReference>
<dbReference type="HPA" id="ENSG00000178662">
    <property type="expression patterns" value="Tissue enhanced (brain)"/>
</dbReference>
<dbReference type="MIM" id="620405">
    <property type="type" value="gene"/>
</dbReference>
<dbReference type="neXtProt" id="NX_Q8WYN3"/>
<dbReference type="OpenTargets" id="ENSG00000178662"/>
<dbReference type="PharmGKB" id="PA164718184"/>
<dbReference type="VEuPathDB" id="HostDB:ENSG00000178662"/>
<dbReference type="eggNOG" id="KOG3813">
    <property type="taxonomic scope" value="Eukaryota"/>
</dbReference>
<dbReference type="GeneTree" id="ENSGT00950000183072"/>
<dbReference type="HOGENOM" id="CLU_034103_1_0_1"/>
<dbReference type="InParanoid" id="Q8WYN3"/>
<dbReference type="OrthoDB" id="5946974at2759"/>
<dbReference type="PAN-GO" id="Q8WYN3">
    <property type="GO annotations" value="4 GO annotations based on evolutionary models"/>
</dbReference>
<dbReference type="PhylomeDB" id="Q8WYN3"/>
<dbReference type="TreeFam" id="TF323969"/>
<dbReference type="PathwayCommons" id="Q8WYN3"/>
<dbReference type="SignaLink" id="Q8WYN3"/>
<dbReference type="BioGRID-ORCS" id="80034">
    <property type="hits" value="17 hits in 1146 CRISPR screens"/>
</dbReference>
<dbReference type="ChiTaRS" id="CSRNP3">
    <property type="organism name" value="human"/>
</dbReference>
<dbReference type="GenomeRNAi" id="80034"/>
<dbReference type="Pharos" id="Q8WYN3">
    <property type="development level" value="Tdark"/>
</dbReference>
<dbReference type="PRO" id="PR:Q8WYN3"/>
<dbReference type="Proteomes" id="UP000005640">
    <property type="component" value="Chromosome 2"/>
</dbReference>
<dbReference type="RNAct" id="Q8WYN3">
    <property type="molecule type" value="protein"/>
</dbReference>
<dbReference type="Bgee" id="ENSG00000178662">
    <property type="expression patterns" value="Expressed in Brodmann (1909) area 23 and 159 other cell types or tissues"/>
</dbReference>
<dbReference type="ExpressionAtlas" id="Q8WYN3">
    <property type="expression patterns" value="baseline and differential"/>
</dbReference>
<dbReference type="GO" id="GO:0000785">
    <property type="term" value="C:chromatin"/>
    <property type="evidence" value="ECO:0000247"/>
    <property type="project" value="NTNU_SB"/>
</dbReference>
<dbReference type="GO" id="GO:0005634">
    <property type="term" value="C:nucleus"/>
    <property type="evidence" value="ECO:0000250"/>
    <property type="project" value="UniProtKB"/>
</dbReference>
<dbReference type="GO" id="GO:0001228">
    <property type="term" value="F:DNA-binding transcription activator activity, RNA polymerase II-specific"/>
    <property type="evidence" value="ECO:0007669"/>
    <property type="project" value="Ensembl"/>
</dbReference>
<dbReference type="GO" id="GO:0003700">
    <property type="term" value="F:DNA-binding transcription factor activity"/>
    <property type="evidence" value="ECO:0000250"/>
    <property type="project" value="UniProtKB"/>
</dbReference>
<dbReference type="GO" id="GO:0000981">
    <property type="term" value="F:DNA-binding transcription factor activity, RNA polymerase II-specific"/>
    <property type="evidence" value="ECO:0000247"/>
    <property type="project" value="NTNU_SB"/>
</dbReference>
<dbReference type="GO" id="GO:0043565">
    <property type="term" value="F:sequence-specific DNA binding"/>
    <property type="evidence" value="ECO:0000318"/>
    <property type="project" value="GO_Central"/>
</dbReference>
<dbReference type="GO" id="GO:0006915">
    <property type="term" value="P:apoptotic process"/>
    <property type="evidence" value="ECO:0007669"/>
    <property type="project" value="UniProtKB-KW"/>
</dbReference>
<dbReference type="GO" id="GO:0043065">
    <property type="term" value="P:positive regulation of apoptotic process"/>
    <property type="evidence" value="ECO:0000250"/>
    <property type="project" value="UniProtKB"/>
</dbReference>
<dbReference type="GO" id="GO:0045944">
    <property type="term" value="P:positive regulation of transcription by RNA polymerase II"/>
    <property type="evidence" value="ECO:0000250"/>
    <property type="project" value="UniProtKB"/>
</dbReference>
<dbReference type="GO" id="GO:0006357">
    <property type="term" value="P:regulation of transcription by RNA polymerase II"/>
    <property type="evidence" value="ECO:0000318"/>
    <property type="project" value="GO_Central"/>
</dbReference>
<dbReference type="InterPro" id="IPR031972">
    <property type="entry name" value="CSRNP_N"/>
</dbReference>
<dbReference type="InterPro" id="IPR023260">
    <property type="entry name" value="Cys/Ser-rich_nuc_prot"/>
</dbReference>
<dbReference type="PANTHER" id="PTHR13580:SF13">
    <property type="entry name" value="CYSTEINE_SERINE-RICH NUCLEAR PROTEIN 3"/>
    <property type="match status" value="1"/>
</dbReference>
<dbReference type="PANTHER" id="PTHR13580">
    <property type="entry name" value="TGF-BETA INDUCED APOPTOSIS PROTEIN"/>
    <property type="match status" value="1"/>
</dbReference>
<dbReference type="Pfam" id="PF16019">
    <property type="entry name" value="CSRNP_N"/>
    <property type="match status" value="1"/>
</dbReference>
<dbReference type="PRINTS" id="PR02031">
    <property type="entry name" value="CYSSERRICHNP"/>
</dbReference>